<evidence type="ECO:0000255" key="1">
    <source>
        <dbReference type="HAMAP-Rule" id="MF_00373"/>
    </source>
</evidence>
<evidence type="ECO:0000305" key="2"/>
<evidence type="ECO:0007829" key="3">
    <source>
        <dbReference type="PDB" id="8FN2"/>
    </source>
</evidence>
<name>RL28_BORBU</name>
<gene>
    <name evidence="1" type="primary">rpmB</name>
    <name type="ordered locus">BB_0350</name>
</gene>
<feature type="chain" id="PRO_0000178437" description="Large ribosomal subunit protein bL28">
    <location>
        <begin position="1"/>
        <end position="92"/>
    </location>
</feature>
<feature type="turn" evidence="3">
    <location>
        <begin position="6"/>
        <end position="8"/>
    </location>
</feature>
<feature type="strand" evidence="3">
    <location>
        <begin position="13"/>
        <end position="17"/>
    </location>
</feature>
<feature type="strand" evidence="3">
    <location>
        <begin position="20"/>
        <end position="23"/>
    </location>
</feature>
<feature type="helix" evidence="3">
    <location>
        <begin position="25"/>
        <end position="27"/>
    </location>
</feature>
<feature type="strand" evidence="3">
    <location>
        <begin position="29"/>
        <end position="34"/>
    </location>
</feature>
<feature type="strand" evidence="3">
    <location>
        <begin position="38"/>
        <end position="42"/>
    </location>
</feature>
<feature type="strand" evidence="3">
    <location>
        <begin position="46"/>
        <end position="53"/>
    </location>
</feature>
<feature type="turn" evidence="3">
    <location>
        <begin position="54"/>
        <end position="57"/>
    </location>
</feature>
<feature type="strand" evidence="3">
    <location>
        <begin position="58"/>
        <end position="65"/>
    </location>
</feature>
<feature type="helix" evidence="3">
    <location>
        <begin position="66"/>
        <end position="75"/>
    </location>
</feature>
<feature type="helix" evidence="3">
    <location>
        <begin position="77"/>
        <end position="83"/>
    </location>
</feature>
<feature type="helix" evidence="3">
    <location>
        <begin position="88"/>
        <end position="90"/>
    </location>
</feature>
<sequence>MARKCEITGKKTMFGNNVPRKGLAKKKGGAGQHIGVKTKRTFKVNLINKKFFIPNLGRSVSIKVSANALRSISKIGLDAFLKKNCKKIENFL</sequence>
<protein>
    <recommendedName>
        <fullName evidence="1">Large ribosomal subunit protein bL28</fullName>
    </recommendedName>
    <alternativeName>
        <fullName evidence="2">50S ribosomal protein L28</fullName>
    </alternativeName>
</protein>
<organism>
    <name type="scientific">Borreliella burgdorferi (strain ATCC 35210 / DSM 4680 / CIP 102532 / B31)</name>
    <name type="common">Borrelia burgdorferi</name>
    <dbReference type="NCBI Taxonomy" id="224326"/>
    <lineage>
        <taxon>Bacteria</taxon>
        <taxon>Pseudomonadati</taxon>
        <taxon>Spirochaetota</taxon>
        <taxon>Spirochaetia</taxon>
        <taxon>Spirochaetales</taxon>
        <taxon>Borreliaceae</taxon>
        <taxon>Borreliella</taxon>
    </lineage>
</organism>
<comment type="similarity">
    <text evidence="1">Belongs to the bacterial ribosomal protein bL28 family.</text>
</comment>
<dbReference type="EMBL" id="AE000783">
    <property type="protein sequence ID" value="AAC66732.1"/>
    <property type="molecule type" value="Genomic_DNA"/>
</dbReference>
<dbReference type="PIR" id="E70143">
    <property type="entry name" value="E70143"/>
</dbReference>
<dbReference type="RefSeq" id="NP_212484.1">
    <property type="nucleotide sequence ID" value="NC_001318.1"/>
</dbReference>
<dbReference type="RefSeq" id="WP_002556947.1">
    <property type="nucleotide sequence ID" value="NC_001318.1"/>
</dbReference>
<dbReference type="PDB" id="8FMW">
    <property type="method" value="EM"/>
    <property type="resolution" value="2.86 A"/>
    <property type="chains" value="AZ=2-92"/>
</dbReference>
<dbReference type="PDB" id="8FN2">
    <property type="method" value="EM"/>
    <property type="resolution" value="3.40 A"/>
    <property type="chains" value="Z=2-92"/>
</dbReference>
<dbReference type="PDBsum" id="8FMW"/>
<dbReference type="PDBsum" id="8FN2"/>
<dbReference type="EMDB" id="EMD-29298"/>
<dbReference type="EMDB" id="EMD-29304"/>
<dbReference type="SMR" id="O51325"/>
<dbReference type="STRING" id="224326.BB_0350"/>
<dbReference type="PaxDb" id="224326-BB_0350"/>
<dbReference type="EnsemblBacteria" id="AAC66732">
    <property type="protein sequence ID" value="AAC66732"/>
    <property type="gene ID" value="BB_0350"/>
</dbReference>
<dbReference type="GeneID" id="56567779"/>
<dbReference type="KEGG" id="bbu:BB_0350"/>
<dbReference type="PATRIC" id="fig|224326.49.peg.746"/>
<dbReference type="HOGENOM" id="CLU_064548_3_2_12"/>
<dbReference type="OrthoDB" id="9805609at2"/>
<dbReference type="Proteomes" id="UP000001807">
    <property type="component" value="Chromosome"/>
</dbReference>
<dbReference type="GO" id="GO:1990904">
    <property type="term" value="C:ribonucleoprotein complex"/>
    <property type="evidence" value="ECO:0007669"/>
    <property type="project" value="UniProtKB-KW"/>
</dbReference>
<dbReference type="GO" id="GO:0005840">
    <property type="term" value="C:ribosome"/>
    <property type="evidence" value="ECO:0007669"/>
    <property type="project" value="UniProtKB-KW"/>
</dbReference>
<dbReference type="GO" id="GO:0003735">
    <property type="term" value="F:structural constituent of ribosome"/>
    <property type="evidence" value="ECO:0007669"/>
    <property type="project" value="InterPro"/>
</dbReference>
<dbReference type="GO" id="GO:0006412">
    <property type="term" value="P:translation"/>
    <property type="evidence" value="ECO:0007669"/>
    <property type="project" value="UniProtKB-UniRule"/>
</dbReference>
<dbReference type="Gene3D" id="2.30.170.40">
    <property type="entry name" value="Ribosomal protein L28/L24"/>
    <property type="match status" value="1"/>
</dbReference>
<dbReference type="HAMAP" id="MF_00373">
    <property type="entry name" value="Ribosomal_bL28"/>
    <property type="match status" value="1"/>
</dbReference>
<dbReference type="InterPro" id="IPR026569">
    <property type="entry name" value="Ribosomal_bL28"/>
</dbReference>
<dbReference type="InterPro" id="IPR034704">
    <property type="entry name" value="Ribosomal_bL28/bL31-like_sf"/>
</dbReference>
<dbReference type="InterPro" id="IPR001383">
    <property type="entry name" value="Ribosomal_bL28_bact-type"/>
</dbReference>
<dbReference type="InterPro" id="IPR037147">
    <property type="entry name" value="Ribosomal_bL28_sf"/>
</dbReference>
<dbReference type="NCBIfam" id="TIGR00009">
    <property type="entry name" value="L28"/>
    <property type="match status" value="1"/>
</dbReference>
<dbReference type="PANTHER" id="PTHR13528">
    <property type="entry name" value="39S RIBOSOMAL PROTEIN L28, MITOCHONDRIAL"/>
    <property type="match status" value="1"/>
</dbReference>
<dbReference type="PANTHER" id="PTHR13528:SF2">
    <property type="entry name" value="LARGE RIBOSOMAL SUBUNIT PROTEIN BL28M"/>
    <property type="match status" value="1"/>
</dbReference>
<dbReference type="Pfam" id="PF00830">
    <property type="entry name" value="Ribosomal_L28"/>
    <property type="match status" value="1"/>
</dbReference>
<dbReference type="SUPFAM" id="SSF143800">
    <property type="entry name" value="L28p-like"/>
    <property type="match status" value="1"/>
</dbReference>
<reference key="1">
    <citation type="journal article" date="1997" name="Nature">
        <title>Genomic sequence of a Lyme disease spirochaete, Borrelia burgdorferi.</title>
        <authorList>
            <person name="Fraser C.M."/>
            <person name="Casjens S."/>
            <person name="Huang W.M."/>
            <person name="Sutton G.G."/>
            <person name="Clayton R.A."/>
            <person name="Lathigra R."/>
            <person name="White O."/>
            <person name="Ketchum K.A."/>
            <person name="Dodson R.J."/>
            <person name="Hickey E.K."/>
            <person name="Gwinn M.L."/>
            <person name="Dougherty B.A."/>
            <person name="Tomb J.-F."/>
            <person name="Fleischmann R.D."/>
            <person name="Richardson D.L."/>
            <person name="Peterson J.D."/>
            <person name="Kerlavage A.R."/>
            <person name="Quackenbush J."/>
            <person name="Salzberg S.L."/>
            <person name="Hanson M."/>
            <person name="van Vugt R."/>
            <person name="Palmer N."/>
            <person name="Adams M.D."/>
            <person name="Gocayne J.D."/>
            <person name="Weidman J.F."/>
            <person name="Utterback T.R."/>
            <person name="Watthey L."/>
            <person name="McDonald L.A."/>
            <person name="Artiach P."/>
            <person name="Bowman C."/>
            <person name="Garland S.A."/>
            <person name="Fujii C."/>
            <person name="Cotton M.D."/>
            <person name="Horst K."/>
            <person name="Roberts K.M."/>
            <person name="Hatch B."/>
            <person name="Smith H.O."/>
            <person name="Venter J.C."/>
        </authorList>
    </citation>
    <scope>NUCLEOTIDE SEQUENCE [LARGE SCALE GENOMIC DNA]</scope>
    <source>
        <strain>ATCC 35210 / DSM 4680 / CIP 102532 / B31</strain>
    </source>
</reference>
<proteinExistence type="evidence at protein level"/>
<keyword id="KW-0002">3D-structure</keyword>
<keyword id="KW-1185">Reference proteome</keyword>
<keyword id="KW-0687">Ribonucleoprotein</keyword>
<keyword id="KW-0689">Ribosomal protein</keyword>
<accession>O51325</accession>